<sequence length="267" mass="30534">MAALVVTEPGRALLRAGTERLLRGGIQELLRPRHEGNSPGLARDFSLSQNRGTVIVERWWKVPLAGEGRKPRLHRRHRVYKLVEDTKHRPKENLELILTQSVENIGVRGDLVSVRKSLGRNALLPQGLAVYASPENKKLFEEEKSLRQEGKLEKLQTKAGEVTVKFLKSCRLEVGMKNNVKWELNPEIVARHFFKNLGVVVAPHTLKLPEEPITRWGEYWCEVTVNGLDTIRVPMSVVNFEKPKTKRYKYWLAQQTAKRMAPTSPQI</sequence>
<protein>
    <recommendedName>
        <fullName evidence="3">Large ribosomal subunit protein bL9m</fullName>
    </recommendedName>
    <alternativeName>
        <fullName>39S ribosomal protein L9, mitochondrial</fullName>
        <shortName>L9mt</shortName>
        <shortName>MRP-L9</shortName>
    </alternativeName>
</protein>
<gene>
    <name type="primary">MRPL9</name>
</gene>
<feature type="transit peptide" description="Mitochondrion" evidence="1">
    <location>
        <begin position="1"/>
        <end position="52"/>
    </location>
</feature>
<feature type="chain" id="PRO_0000319309" description="Large ribosomal subunit protein bL9m">
    <location>
        <begin position="53"/>
        <end position="267"/>
    </location>
</feature>
<keyword id="KW-0496">Mitochondrion</keyword>
<keyword id="KW-1185">Reference proteome</keyword>
<keyword id="KW-0687">Ribonucleoprotein</keyword>
<keyword id="KW-0689">Ribosomal protein</keyword>
<keyword id="KW-0809">Transit peptide</keyword>
<dbReference type="EMBL" id="DP000542">
    <property type="protein sequence ID" value="ABY40804.1"/>
    <property type="molecule type" value="Genomic_DNA"/>
</dbReference>
<dbReference type="RefSeq" id="NP_001162430.1">
    <property type="nucleotide sequence ID" value="NM_001168959.1"/>
</dbReference>
<dbReference type="SMR" id="A9X1A9"/>
<dbReference type="STRING" id="9555.ENSPANP00000007885"/>
<dbReference type="Ensembl" id="ENSPANT00000013541.3">
    <property type="protein sequence ID" value="ENSPANP00000007885.1"/>
    <property type="gene ID" value="ENSPANG00000008737.3"/>
</dbReference>
<dbReference type="GeneID" id="100137425"/>
<dbReference type="KEGG" id="panu:100137425"/>
<dbReference type="CTD" id="65005"/>
<dbReference type="eggNOG" id="KOG4607">
    <property type="taxonomic scope" value="Eukaryota"/>
</dbReference>
<dbReference type="GeneTree" id="ENSGT00390000008281"/>
<dbReference type="HOGENOM" id="CLU_078938_0_0_1"/>
<dbReference type="OrthoDB" id="5132at314294"/>
<dbReference type="Proteomes" id="UP000028761">
    <property type="component" value="Chromosome 1"/>
</dbReference>
<dbReference type="Bgee" id="ENSPANG00000008737">
    <property type="expression patterns" value="Expressed in ascending colon and 65 other cell types or tissues"/>
</dbReference>
<dbReference type="ExpressionAtlas" id="A9X1A9">
    <property type="expression patterns" value="baseline"/>
</dbReference>
<dbReference type="GO" id="GO:0005762">
    <property type="term" value="C:mitochondrial large ribosomal subunit"/>
    <property type="evidence" value="ECO:0000250"/>
    <property type="project" value="UniProtKB"/>
</dbReference>
<dbReference type="GO" id="GO:0005739">
    <property type="term" value="C:mitochondrion"/>
    <property type="evidence" value="ECO:0000250"/>
    <property type="project" value="UniProtKB"/>
</dbReference>
<dbReference type="GO" id="GO:0003735">
    <property type="term" value="F:structural constituent of ribosome"/>
    <property type="evidence" value="ECO:0007669"/>
    <property type="project" value="InterPro"/>
</dbReference>
<dbReference type="GO" id="GO:0006412">
    <property type="term" value="P:translation"/>
    <property type="evidence" value="ECO:0007669"/>
    <property type="project" value="InterPro"/>
</dbReference>
<dbReference type="FunFam" id="3.40.5.10:FF:000005">
    <property type="entry name" value="39S ribosomal protein L9, mitochondrial"/>
    <property type="match status" value="1"/>
</dbReference>
<dbReference type="Gene3D" id="3.40.5.10">
    <property type="entry name" value="Ribosomal protein L9, N-terminal domain"/>
    <property type="match status" value="1"/>
</dbReference>
<dbReference type="InterPro" id="IPR056864">
    <property type="entry name" value="MRP-L9_N"/>
</dbReference>
<dbReference type="InterPro" id="IPR000244">
    <property type="entry name" value="Ribosomal_bL9"/>
</dbReference>
<dbReference type="InterPro" id="IPR009027">
    <property type="entry name" value="Ribosomal_bL9/RNase_H1_N"/>
</dbReference>
<dbReference type="InterPro" id="IPR020070">
    <property type="entry name" value="Ribosomal_bL9_N"/>
</dbReference>
<dbReference type="InterPro" id="IPR036935">
    <property type="entry name" value="Ribosomal_bL9_N_sf"/>
</dbReference>
<dbReference type="InterPro" id="IPR054302">
    <property type="entry name" value="Ribosomal_bL9m_C"/>
</dbReference>
<dbReference type="PANTHER" id="PTHR21368">
    <property type="entry name" value="50S RIBOSOMAL PROTEIN L9"/>
    <property type="match status" value="1"/>
</dbReference>
<dbReference type="Pfam" id="PF25131">
    <property type="entry name" value="bL9m_N"/>
    <property type="match status" value="1"/>
</dbReference>
<dbReference type="Pfam" id="PF22078">
    <property type="entry name" value="Ribosomal_bL9m_C"/>
    <property type="match status" value="1"/>
</dbReference>
<dbReference type="Pfam" id="PF01281">
    <property type="entry name" value="Ribosomal_L9_N"/>
    <property type="match status" value="1"/>
</dbReference>
<dbReference type="SUPFAM" id="SSF55658">
    <property type="entry name" value="L9 N-domain-like"/>
    <property type="match status" value="1"/>
</dbReference>
<comment type="subunit">
    <text evidence="2">Component of the mitochondrial ribosome large subunit (39S) which comprises a 16S rRNA and about 50 distinct proteins.</text>
</comment>
<comment type="subcellular location">
    <subcellularLocation>
        <location evidence="2">Mitochondrion</location>
    </subcellularLocation>
</comment>
<comment type="similarity">
    <text evidence="3">Belongs to the bacterial ribosomal protein bL9 family.</text>
</comment>
<accession>A9X1A9</accession>
<proteinExistence type="inferred from homology"/>
<organism>
    <name type="scientific">Papio anubis</name>
    <name type="common">Olive baboon</name>
    <dbReference type="NCBI Taxonomy" id="9555"/>
    <lineage>
        <taxon>Eukaryota</taxon>
        <taxon>Metazoa</taxon>
        <taxon>Chordata</taxon>
        <taxon>Craniata</taxon>
        <taxon>Vertebrata</taxon>
        <taxon>Euteleostomi</taxon>
        <taxon>Mammalia</taxon>
        <taxon>Eutheria</taxon>
        <taxon>Euarchontoglires</taxon>
        <taxon>Primates</taxon>
        <taxon>Haplorrhini</taxon>
        <taxon>Catarrhini</taxon>
        <taxon>Cercopithecidae</taxon>
        <taxon>Cercopithecinae</taxon>
        <taxon>Papio</taxon>
    </lineage>
</organism>
<name>RM09_PAPAN</name>
<reference key="1">
    <citation type="submission" date="2007-12" db="EMBL/GenBank/DDBJ databases">
        <title>NISC comparative sequencing initiative.</title>
        <authorList>
            <person name="Antonellis A."/>
            <person name="Benjamin B."/>
            <person name="Blakesley R.W."/>
            <person name="Bouffard G.G."/>
            <person name="Brinkley C."/>
            <person name="Brooks S."/>
            <person name="Chu G."/>
            <person name="Chub I."/>
            <person name="Coleman H."/>
            <person name="Fuksenko T."/>
            <person name="Gestole M."/>
            <person name="Gregory M."/>
            <person name="Guan X."/>
            <person name="Gupta J."/>
            <person name="Gurson N."/>
            <person name="Han E."/>
            <person name="Han J."/>
            <person name="Hansen N."/>
            <person name="Hargrove A."/>
            <person name="Hines-Harris K."/>
            <person name="Ho S.-L."/>
            <person name="Hu P."/>
            <person name="Hunter G."/>
            <person name="Hurle B."/>
            <person name="Idol J.R."/>
            <person name="Johnson T."/>
            <person name="Knight E."/>
            <person name="Kwong P."/>
            <person name="Lee-Lin S.-Q."/>
            <person name="Legaspi R."/>
            <person name="Madden M."/>
            <person name="Maduro Q.L."/>
            <person name="Maduro V.B."/>
            <person name="Margulies E.H."/>
            <person name="Masiello C."/>
            <person name="Maskeri B."/>
            <person name="McDowell J."/>
            <person name="Merkulov G."/>
            <person name="Montemayor C."/>
            <person name="Mullikin J.C."/>
            <person name="Park M."/>
            <person name="Prasad A."/>
            <person name="Ramsahoye C."/>
            <person name="Reddix-Dugue N."/>
            <person name="Riebow N."/>
            <person name="Schandler K."/>
            <person name="Schueler M.G."/>
            <person name="Sison C."/>
            <person name="Smith L."/>
            <person name="Stantripop S."/>
            <person name="Thomas J.W."/>
            <person name="Thomas P.J."/>
            <person name="Tsipouri V."/>
            <person name="Young A."/>
            <person name="Green E.D."/>
        </authorList>
    </citation>
    <scope>NUCLEOTIDE SEQUENCE [LARGE SCALE GENOMIC DNA]</scope>
</reference>
<evidence type="ECO:0000250" key="1">
    <source>
        <dbReference type="UniProtKB" id="Q2TBK2"/>
    </source>
</evidence>
<evidence type="ECO:0000250" key="2">
    <source>
        <dbReference type="UniProtKB" id="Q9BYD2"/>
    </source>
</evidence>
<evidence type="ECO:0000305" key="3"/>